<feature type="chain" id="PRO_1000132554" description="Large ribosomal subunit protein uL10">
    <location>
        <begin position="1"/>
        <end position="338"/>
    </location>
</feature>
<feature type="region of interest" description="Disordered" evidence="2">
    <location>
        <begin position="295"/>
        <end position="338"/>
    </location>
</feature>
<feature type="compositionally biased region" description="Acidic residues" evidence="2">
    <location>
        <begin position="312"/>
        <end position="330"/>
    </location>
</feature>
<dbReference type="EMBL" id="CP000575">
    <property type="protein sequence ID" value="ABN70192.1"/>
    <property type="molecule type" value="Genomic_DNA"/>
</dbReference>
<dbReference type="RefSeq" id="WP_011839383.1">
    <property type="nucleotide sequence ID" value="NC_009033.1"/>
</dbReference>
<dbReference type="SMR" id="A3DNI2"/>
<dbReference type="STRING" id="399550.Smar_1095"/>
<dbReference type="GeneID" id="4908011"/>
<dbReference type="KEGG" id="smr:Smar_1095"/>
<dbReference type="eggNOG" id="arCOG04288">
    <property type="taxonomic scope" value="Archaea"/>
</dbReference>
<dbReference type="HOGENOM" id="CLU_053173_0_0_2"/>
<dbReference type="OrthoDB" id="30930at2157"/>
<dbReference type="Proteomes" id="UP000000254">
    <property type="component" value="Chromosome"/>
</dbReference>
<dbReference type="GO" id="GO:0022625">
    <property type="term" value="C:cytosolic large ribosomal subunit"/>
    <property type="evidence" value="ECO:0007669"/>
    <property type="project" value="TreeGrafter"/>
</dbReference>
<dbReference type="GO" id="GO:0070180">
    <property type="term" value="F:large ribosomal subunit rRNA binding"/>
    <property type="evidence" value="ECO:0007669"/>
    <property type="project" value="UniProtKB-UniRule"/>
</dbReference>
<dbReference type="GO" id="GO:0003735">
    <property type="term" value="F:structural constituent of ribosome"/>
    <property type="evidence" value="ECO:0007669"/>
    <property type="project" value="TreeGrafter"/>
</dbReference>
<dbReference type="GO" id="GO:0002181">
    <property type="term" value="P:cytoplasmic translation"/>
    <property type="evidence" value="ECO:0007669"/>
    <property type="project" value="TreeGrafter"/>
</dbReference>
<dbReference type="GO" id="GO:0000027">
    <property type="term" value="P:ribosomal large subunit assembly"/>
    <property type="evidence" value="ECO:0007669"/>
    <property type="project" value="TreeGrafter"/>
</dbReference>
<dbReference type="CDD" id="cd05795">
    <property type="entry name" value="Ribosomal_P0_L10e"/>
    <property type="match status" value="1"/>
</dbReference>
<dbReference type="Gene3D" id="3.30.70.1730">
    <property type="match status" value="1"/>
</dbReference>
<dbReference type="Gene3D" id="3.90.105.20">
    <property type="match status" value="1"/>
</dbReference>
<dbReference type="Gene3D" id="6.10.140.760">
    <property type="match status" value="1"/>
</dbReference>
<dbReference type="HAMAP" id="MF_00280">
    <property type="entry name" value="Ribosomal_uL10_arch"/>
    <property type="match status" value="1"/>
</dbReference>
<dbReference type="InterPro" id="IPR050323">
    <property type="entry name" value="Ribosomal_protein_uL10"/>
</dbReference>
<dbReference type="InterPro" id="IPR001790">
    <property type="entry name" value="Ribosomal_uL10"/>
</dbReference>
<dbReference type="InterPro" id="IPR040637">
    <property type="entry name" value="Ribosomal_uL10-like_insert"/>
</dbReference>
<dbReference type="InterPro" id="IPR043164">
    <property type="entry name" value="Ribosomal_uL10-like_insert_sf"/>
</dbReference>
<dbReference type="InterPro" id="IPR043141">
    <property type="entry name" value="Ribosomal_uL10-like_sf"/>
</dbReference>
<dbReference type="InterPro" id="IPR022909">
    <property type="entry name" value="Ribosomal_uL10_arc"/>
</dbReference>
<dbReference type="NCBIfam" id="NF003095">
    <property type="entry name" value="PRK04019.1-1"/>
    <property type="match status" value="1"/>
</dbReference>
<dbReference type="PANTHER" id="PTHR45699">
    <property type="entry name" value="60S ACIDIC RIBOSOMAL PROTEIN P0"/>
    <property type="match status" value="1"/>
</dbReference>
<dbReference type="PANTHER" id="PTHR45699:SF3">
    <property type="entry name" value="LARGE RIBOSOMAL SUBUNIT PROTEIN UL10"/>
    <property type="match status" value="1"/>
</dbReference>
<dbReference type="Pfam" id="PF00466">
    <property type="entry name" value="Ribosomal_L10"/>
    <property type="match status" value="1"/>
</dbReference>
<dbReference type="Pfam" id="PF17777">
    <property type="entry name" value="RL10P_insert"/>
    <property type="match status" value="1"/>
</dbReference>
<dbReference type="SUPFAM" id="SSF160369">
    <property type="entry name" value="Ribosomal protein L10-like"/>
    <property type="match status" value="1"/>
</dbReference>
<proteinExistence type="inferred from homology"/>
<name>RL10_STAMF</name>
<organism>
    <name type="scientific">Staphylothermus marinus (strain ATCC 43588 / DSM 3639 / JCM 9404 / F1)</name>
    <dbReference type="NCBI Taxonomy" id="399550"/>
    <lineage>
        <taxon>Archaea</taxon>
        <taxon>Thermoproteota</taxon>
        <taxon>Thermoprotei</taxon>
        <taxon>Desulfurococcales</taxon>
        <taxon>Desulfurococcaceae</taxon>
        <taxon>Staphylothermus</taxon>
    </lineage>
</organism>
<reference key="1">
    <citation type="journal article" date="2009" name="BMC Genomics">
        <title>The complete genome sequence of Staphylothermus marinus reveals differences in sulfur metabolism among heterotrophic Crenarchaeota.</title>
        <authorList>
            <person name="Anderson I.J."/>
            <person name="Dharmarajan L."/>
            <person name="Rodriguez J."/>
            <person name="Hooper S."/>
            <person name="Porat I."/>
            <person name="Ulrich L.E."/>
            <person name="Elkins J.G."/>
            <person name="Mavromatis K."/>
            <person name="Sun H."/>
            <person name="Land M."/>
            <person name="Lapidus A."/>
            <person name="Lucas S."/>
            <person name="Barry K."/>
            <person name="Huber H."/>
            <person name="Zhulin I.B."/>
            <person name="Whitman W.B."/>
            <person name="Mukhopadhyay B."/>
            <person name="Woese C."/>
            <person name="Bristow J."/>
            <person name="Kyrpides N."/>
        </authorList>
    </citation>
    <scope>NUCLEOTIDE SEQUENCE [LARGE SCALE GENOMIC DNA]</scope>
    <source>
        <strain>ATCC 43588 / DSM 3639 / JCM 9404 / F1</strain>
    </source>
</reference>
<reference key="2">
    <citation type="journal article" date="2009" name="Stand. Genomic Sci.">
        <title>Complete genome sequence of Staphylothermus marinus Stetter and Fiala 1986 type strain F1.</title>
        <authorList>
            <person name="Anderson I.J."/>
            <person name="Sun H."/>
            <person name="Lapidus A."/>
            <person name="Copeland A."/>
            <person name="Glavina Del Rio T."/>
            <person name="Tice H."/>
            <person name="Dalin E."/>
            <person name="Lucas S."/>
            <person name="Barry K."/>
            <person name="Land M."/>
            <person name="Richardson P."/>
            <person name="Huber H."/>
            <person name="Kyrpides N.C."/>
        </authorList>
    </citation>
    <scope>NUCLEOTIDE SEQUENCE [LARGE SCALE GENOMIC DNA]</scope>
    <source>
        <strain>ATCC 43588 / DSM 3639 / JCM 9404 / F1</strain>
    </source>
</reference>
<gene>
    <name evidence="1" type="primary">rpl10</name>
    <name evidence="1" type="synonym">rplP0</name>
    <name type="ordered locus">Smar_1095</name>
</gene>
<keyword id="KW-1185">Reference proteome</keyword>
<keyword id="KW-0687">Ribonucleoprotein</keyword>
<keyword id="KW-0689">Ribosomal protein</keyword>
<keyword id="KW-0694">RNA-binding</keyword>
<keyword id="KW-0699">rRNA-binding</keyword>
<comment type="function">
    <text evidence="1">Forms part of the ribosomal stalk, playing a central role in the interaction of the ribosome with GTP-bound translation factors.</text>
</comment>
<comment type="subunit">
    <text evidence="1">Part of the 50S ribosomal subunit. Forms part of the ribosomal stalk which helps the ribosome interact with GTP-bound translation factors. Forms a heptameric L10(L12)2(L12)2(L12)2 complex, where L10 forms an elongated spine to which the L12 dimers bind in a sequential fashion.</text>
</comment>
<comment type="similarity">
    <text evidence="1">Belongs to the universal ribosomal protein uL10 family.</text>
</comment>
<accession>A3DNI2</accession>
<evidence type="ECO:0000255" key="1">
    <source>
        <dbReference type="HAMAP-Rule" id="MF_00280"/>
    </source>
</evidence>
<evidence type="ECO:0000256" key="2">
    <source>
        <dbReference type="SAM" id="MobiDB-lite"/>
    </source>
</evidence>
<evidence type="ECO:0000305" key="3"/>
<sequence length="338" mass="37594">MSATAVPKAKRIPQWKIEEVEYLTTLFKSYPVFAIADLTGFPTNQLQKLRKKLSKKVLFRVSKNKLILRALRNAGIDTSKFEELLTGQNLLLFTHMNAFELSLLLDKYKAKTYYKPGEIAQQEIVIPEGNTGLSPGPILSTFSKLKIPTRIQGNSIVITRDTVVAKPGDTISEELASLLQRLDIALKEVKINIKAAYDHGIIILRDQLVLDLEEYKNMVMNAHLDALKIGSEIAWPVPEILELSLNKAFRQALALAAEAGYVTPDTAEYVFRAAIMKALALAAEVSKYAPDLGLEVPTIQPTTPPEKKEEEEKKEEEEEEAETVSEEELAEGLGALFG</sequence>
<protein>
    <recommendedName>
        <fullName evidence="1">Large ribosomal subunit protein uL10</fullName>
    </recommendedName>
    <alternativeName>
        <fullName evidence="3">50S ribosomal protein L10</fullName>
    </alternativeName>
    <alternativeName>
        <fullName evidence="1">Acidic ribosomal protein P0 homolog</fullName>
    </alternativeName>
</protein>